<sequence length="188" mass="20381">MPDPTQNPNVTPELEQHAAPEAAAEAAPESSADVMPSLEETLRQAELKAAEHYDAWLRAKAEGENIRRRAQEDIAKATKFAAEKFASAMVPVKDSLEAALAVENQTVEKLREGVELTLKQLVSAFEGAGLAEENPLGQKFDPNKHQAISAIEAEGEPNTVINVLQKGYLLHERVVRPALVVVSKAKAQ</sequence>
<name>GRPE_AZOSB</name>
<proteinExistence type="inferred from homology"/>
<feature type="chain" id="PRO_1000137536" description="Protein GrpE">
    <location>
        <begin position="1"/>
        <end position="188"/>
    </location>
</feature>
<feature type="region of interest" description="Disordered" evidence="2">
    <location>
        <begin position="1"/>
        <end position="35"/>
    </location>
</feature>
<feature type="compositionally biased region" description="Polar residues" evidence="2">
    <location>
        <begin position="1"/>
        <end position="10"/>
    </location>
</feature>
<feature type="compositionally biased region" description="Low complexity" evidence="2">
    <location>
        <begin position="19"/>
        <end position="32"/>
    </location>
</feature>
<dbReference type="EMBL" id="AM406670">
    <property type="protein sequence ID" value="CAL93681.1"/>
    <property type="molecule type" value="Genomic_DNA"/>
</dbReference>
<dbReference type="RefSeq" id="WP_011764798.1">
    <property type="nucleotide sequence ID" value="NC_008702.1"/>
</dbReference>
<dbReference type="SMR" id="A1K4C6"/>
<dbReference type="STRING" id="62928.azo1064"/>
<dbReference type="KEGG" id="aoa:dqs_1172"/>
<dbReference type="KEGG" id="azo:azo1064"/>
<dbReference type="eggNOG" id="COG0576">
    <property type="taxonomic scope" value="Bacteria"/>
</dbReference>
<dbReference type="HOGENOM" id="CLU_057217_6_1_4"/>
<dbReference type="OrthoDB" id="9789811at2"/>
<dbReference type="Proteomes" id="UP000002588">
    <property type="component" value="Chromosome"/>
</dbReference>
<dbReference type="GO" id="GO:0005829">
    <property type="term" value="C:cytosol"/>
    <property type="evidence" value="ECO:0007669"/>
    <property type="project" value="TreeGrafter"/>
</dbReference>
<dbReference type="GO" id="GO:0000774">
    <property type="term" value="F:adenyl-nucleotide exchange factor activity"/>
    <property type="evidence" value="ECO:0007669"/>
    <property type="project" value="InterPro"/>
</dbReference>
<dbReference type="GO" id="GO:0042803">
    <property type="term" value="F:protein homodimerization activity"/>
    <property type="evidence" value="ECO:0007669"/>
    <property type="project" value="InterPro"/>
</dbReference>
<dbReference type="GO" id="GO:0051087">
    <property type="term" value="F:protein-folding chaperone binding"/>
    <property type="evidence" value="ECO:0007669"/>
    <property type="project" value="InterPro"/>
</dbReference>
<dbReference type="GO" id="GO:0051082">
    <property type="term" value="F:unfolded protein binding"/>
    <property type="evidence" value="ECO:0007669"/>
    <property type="project" value="TreeGrafter"/>
</dbReference>
<dbReference type="GO" id="GO:0006457">
    <property type="term" value="P:protein folding"/>
    <property type="evidence" value="ECO:0007669"/>
    <property type="project" value="InterPro"/>
</dbReference>
<dbReference type="CDD" id="cd00446">
    <property type="entry name" value="GrpE"/>
    <property type="match status" value="1"/>
</dbReference>
<dbReference type="FunFam" id="2.30.22.10:FF:000001">
    <property type="entry name" value="Protein GrpE"/>
    <property type="match status" value="1"/>
</dbReference>
<dbReference type="Gene3D" id="3.90.20.20">
    <property type="match status" value="1"/>
</dbReference>
<dbReference type="Gene3D" id="2.30.22.10">
    <property type="entry name" value="Head domain of nucleotide exchange factor GrpE"/>
    <property type="match status" value="1"/>
</dbReference>
<dbReference type="HAMAP" id="MF_01151">
    <property type="entry name" value="GrpE"/>
    <property type="match status" value="1"/>
</dbReference>
<dbReference type="InterPro" id="IPR000740">
    <property type="entry name" value="GrpE"/>
</dbReference>
<dbReference type="InterPro" id="IPR013805">
    <property type="entry name" value="GrpE_coiled_coil"/>
</dbReference>
<dbReference type="InterPro" id="IPR009012">
    <property type="entry name" value="GrpE_head"/>
</dbReference>
<dbReference type="NCBIfam" id="NF010737">
    <property type="entry name" value="PRK14139.1"/>
    <property type="match status" value="1"/>
</dbReference>
<dbReference type="NCBIfam" id="NF010738">
    <property type="entry name" value="PRK14140.1"/>
    <property type="match status" value="1"/>
</dbReference>
<dbReference type="NCBIfam" id="NF010748">
    <property type="entry name" value="PRK14150.1"/>
    <property type="match status" value="1"/>
</dbReference>
<dbReference type="PANTHER" id="PTHR21237">
    <property type="entry name" value="GRPE PROTEIN"/>
    <property type="match status" value="1"/>
</dbReference>
<dbReference type="PANTHER" id="PTHR21237:SF23">
    <property type="entry name" value="GRPE PROTEIN HOMOLOG, MITOCHONDRIAL"/>
    <property type="match status" value="1"/>
</dbReference>
<dbReference type="Pfam" id="PF01025">
    <property type="entry name" value="GrpE"/>
    <property type="match status" value="1"/>
</dbReference>
<dbReference type="PRINTS" id="PR00773">
    <property type="entry name" value="GRPEPROTEIN"/>
</dbReference>
<dbReference type="SUPFAM" id="SSF58014">
    <property type="entry name" value="Coiled-coil domain of nucleotide exchange factor GrpE"/>
    <property type="match status" value="1"/>
</dbReference>
<dbReference type="SUPFAM" id="SSF51064">
    <property type="entry name" value="Head domain of nucleotide exchange factor GrpE"/>
    <property type="match status" value="1"/>
</dbReference>
<dbReference type="PROSITE" id="PS01071">
    <property type="entry name" value="GRPE"/>
    <property type="match status" value="1"/>
</dbReference>
<gene>
    <name evidence="1" type="primary">grpE</name>
    <name type="ordered locus">azo1064</name>
</gene>
<protein>
    <recommendedName>
        <fullName evidence="1">Protein GrpE</fullName>
    </recommendedName>
    <alternativeName>
        <fullName evidence="1">HSP-70 cofactor</fullName>
    </alternativeName>
</protein>
<evidence type="ECO:0000255" key="1">
    <source>
        <dbReference type="HAMAP-Rule" id="MF_01151"/>
    </source>
</evidence>
<evidence type="ECO:0000256" key="2">
    <source>
        <dbReference type="SAM" id="MobiDB-lite"/>
    </source>
</evidence>
<organism>
    <name type="scientific">Azoarcus sp. (strain BH72)</name>
    <dbReference type="NCBI Taxonomy" id="418699"/>
    <lineage>
        <taxon>Bacteria</taxon>
        <taxon>Pseudomonadati</taxon>
        <taxon>Pseudomonadota</taxon>
        <taxon>Betaproteobacteria</taxon>
        <taxon>Rhodocyclales</taxon>
        <taxon>Zoogloeaceae</taxon>
        <taxon>Azoarcus</taxon>
    </lineage>
</organism>
<reference key="1">
    <citation type="journal article" date="2006" name="Nat. Biotechnol.">
        <title>Complete genome of the mutualistic, N2-fixing grass endophyte Azoarcus sp. strain BH72.</title>
        <authorList>
            <person name="Krause A."/>
            <person name="Ramakumar A."/>
            <person name="Bartels D."/>
            <person name="Battistoni F."/>
            <person name="Bekel T."/>
            <person name="Boch J."/>
            <person name="Boehm M."/>
            <person name="Friedrich F."/>
            <person name="Hurek T."/>
            <person name="Krause L."/>
            <person name="Linke B."/>
            <person name="McHardy A.C."/>
            <person name="Sarkar A."/>
            <person name="Schneiker S."/>
            <person name="Syed A.A."/>
            <person name="Thauer R."/>
            <person name="Vorhoelter F.-J."/>
            <person name="Weidner S."/>
            <person name="Puehler A."/>
            <person name="Reinhold-Hurek B."/>
            <person name="Kaiser O."/>
            <person name="Goesmann A."/>
        </authorList>
    </citation>
    <scope>NUCLEOTIDE SEQUENCE [LARGE SCALE GENOMIC DNA]</scope>
    <source>
        <strain>BH72</strain>
    </source>
</reference>
<keyword id="KW-0143">Chaperone</keyword>
<keyword id="KW-0963">Cytoplasm</keyword>
<keyword id="KW-1185">Reference proteome</keyword>
<keyword id="KW-0346">Stress response</keyword>
<accession>A1K4C6</accession>
<comment type="function">
    <text evidence="1">Participates actively in the response to hyperosmotic and heat shock by preventing the aggregation of stress-denatured proteins, in association with DnaK and GrpE. It is the nucleotide exchange factor for DnaK and may function as a thermosensor. Unfolded proteins bind initially to DnaJ; upon interaction with the DnaJ-bound protein, DnaK hydrolyzes its bound ATP, resulting in the formation of a stable complex. GrpE releases ADP from DnaK; ATP binding to DnaK triggers the release of the substrate protein, thus completing the reaction cycle. Several rounds of ATP-dependent interactions between DnaJ, DnaK and GrpE are required for fully efficient folding.</text>
</comment>
<comment type="subunit">
    <text evidence="1">Homodimer.</text>
</comment>
<comment type="subcellular location">
    <subcellularLocation>
        <location evidence="1">Cytoplasm</location>
    </subcellularLocation>
</comment>
<comment type="similarity">
    <text evidence="1">Belongs to the GrpE family.</text>
</comment>